<accession>Q4UNF2</accession>
<proteinExistence type="inferred from homology"/>
<feature type="chain" id="PRO_0000055409" description="Protein-export protein SecB">
    <location>
        <begin position="1"/>
        <end position="152"/>
    </location>
</feature>
<gene>
    <name evidence="1" type="primary">secB</name>
    <name type="ordered locus">RF_0055</name>
</gene>
<dbReference type="EMBL" id="CP000053">
    <property type="protein sequence ID" value="AAY60906.1"/>
    <property type="molecule type" value="Genomic_DNA"/>
</dbReference>
<dbReference type="SMR" id="Q4UNF2"/>
<dbReference type="STRING" id="315456.RF_0055"/>
<dbReference type="KEGG" id="rfe:RF_0055"/>
<dbReference type="eggNOG" id="COG1952">
    <property type="taxonomic scope" value="Bacteria"/>
</dbReference>
<dbReference type="HOGENOM" id="CLU_111574_0_0_5"/>
<dbReference type="OrthoDB" id="9795145at2"/>
<dbReference type="Proteomes" id="UP000008548">
    <property type="component" value="Chromosome"/>
</dbReference>
<dbReference type="GO" id="GO:0005737">
    <property type="term" value="C:cytoplasm"/>
    <property type="evidence" value="ECO:0007669"/>
    <property type="project" value="UniProtKB-SubCell"/>
</dbReference>
<dbReference type="GO" id="GO:0051082">
    <property type="term" value="F:unfolded protein binding"/>
    <property type="evidence" value="ECO:0007669"/>
    <property type="project" value="InterPro"/>
</dbReference>
<dbReference type="GO" id="GO:0006457">
    <property type="term" value="P:protein folding"/>
    <property type="evidence" value="ECO:0007669"/>
    <property type="project" value="UniProtKB-UniRule"/>
</dbReference>
<dbReference type="GO" id="GO:0051262">
    <property type="term" value="P:protein tetramerization"/>
    <property type="evidence" value="ECO:0007669"/>
    <property type="project" value="InterPro"/>
</dbReference>
<dbReference type="GO" id="GO:0015031">
    <property type="term" value="P:protein transport"/>
    <property type="evidence" value="ECO:0007669"/>
    <property type="project" value="UniProtKB-UniRule"/>
</dbReference>
<dbReference type="CDD" id="cd00557">
    <property type="entry name" value="Translocase_SecB"/>
    <property type="match status" value="1"/>
</dbReference>
<dbReference type="Gene3D" id="3.10.420.10">
    <property type="entry name" value="SecB-like"/>
    <property type="match status" value="1"/>
</dbReference>
<dbReference type="HAMAP" id="MF_00821">
    <property type="entry name" value="SecB"/>
    <property type="match status" value="1"/>
</dbReference>
<dbReference type="InterPro" id="IPR003708">
    <property type="entry name" value="SecB"/>
</dbReference>
<dbReference type="InterPro" id="IPR035958">
    <property type="entry name" value="SecB-like_sf"/>
</dbReference>
<dbReference type="NCBIfam" id="NF004392">
    <property type="entry name" value="PRK05751.1-3"/>
    <property type="match status" value="1"/>
</dbReference>
<dbReference type="NCBIfam" id="TIGR00809">
    <property type="entry name" value="secB"/>
    <property type="match status" value="1"/>
</dbReference>
<dbReference type="PANTHER" id="PTHR36918">
    <property type="match status" value="1"/>
</dbReference>
<dbReference type="PANTHER" id="PTHR36918:SF1">
    <property type="entry name" value="PROTEIN-EXPORT PROTEIN SECB"/>
    <property type="match status" value="1"/>
</dbReference>
<dbReference type="Pfam" id="PF02556">
    <property type="entry name" value="SecB"/>
    <property type="match status" value="1"/>
</dbReference>
<dbReference type="PRINTS" id="PR01594">
    <property type="entry name" value="SECBCHAPRONE"/>
</dbReference>
<dbReference type="SUPFAM" id="SSF54611">
    <property type="entry name" value="SecB-like"/>
    <property type="match status" value="1"/>
</dbReference>
<organism>
    <name type="scientific">Rickettsia felis (strain ATCC VR-1525 / URRWXCal2)</name>
    <name type="common">Rickettsia azadi</name>
    <dbReference type="NCBI Taxonomy" id="315456"/>
    <lineage>
        <taxon>Bacteria</taxon>
        <taxon>Pseudomonadati</taxon>
        <taxon>Pseudomonadota</taxon>
        <taxon>Alphaproteobacteria</taxon>
        <taxon>Rickettsiales</taxon>
        <taxon>Rickettsiaceae</taxon>
        <taxon>Rickettsieae</taxon>
        <taxon>Rickettsia</taxon>
        <taxon>spotted fever group</taxon>
    </lineage>
</organism>
<sequence>MSTINTDTNEAMPHISVNAQYIKDLSLENPSAPSSLAALEQRPQIDLSLDINITNLSEENFYEVELNIEATARNEKYKLFQIELKYAGVFNLINIDSEQHPILLSVHCPAMIFPFARKIIASCTQDAGFQPLMIDPIDFGALYHKKMSEHQN</sequence>
<evidence type="ECO:0000255" key="1">
    <source>
        <dbReference type="HAMAP-Rule" id="MF_00821"/>
    </source>
</evidence>
<keyword id="KW-0143">Chaperone</keyword>
<keyword id="KW-0963">Cytoplasm</keyword>
<keyword id="KW-0653">Protein transport</keyword>
<keyword id="KW-0811">Translocation</keyword>
<keyword id="KW-0813">Transport</keyword>
<name>SECB_RICFE</name>
<protein>
    <recommendedName>
        <fullName evidence="1">Protein-export protein SecB</fullName>
    </recommendedName>
</protein>
<reference key="1">
    <citation type="journal article" date="2005" name="PLoS Biol.">
        <title>The genome sequence of Rickettsia felis identifies the first putative conjugative plasmid in an obligate intracellular parasite.</title>
        <authorList>
            <person name="Ogata H."/>
            <person name="Renesto P."/>
            <person name="Audic S."/>
            <person name="Robert C."/>
            <person name="Blanc G."/>
            <person name="Fournier P.-E."/>
            <person name="Parinello H."/>
            <person name="Claverie J.-M."/>
            <person name="Raoult D."/>
        </authorList>
    </citation>
    <scope>NUCLEOTIDE SEQUENCE [LARGE SCALE GENOMIC DNA]</scope>
    <source>
        <strain>ATCC VR-1525 / URRWXCal2</strain>
    </source>
</reference>
<comment type="function">
    <text evidence="1">One of the proteins required for the normal export of preproteins out of the cell cytoplasm. It is a molecular chaperone that binds to a subset of precursor proteins, maintaining them in a translocation-competent state. It also specifically binds to its receptor SecA.</text>
</comment>
<comment type="subunit">
    <text evidence="1">Homotetramer, a dimer of dimers. One homotetramer interacts with 1 SecA dimer.</text>
</comment>
<comment type="subcellular location">
    <subcellularLocation>
        <location evidence="1">Cytoplasm</location>
    </subcellularLocation>
</comment>
<comment type="similarity">
    <text evidence="1">Belongs to the SecB family.</text>
</comment>